<proteinExistence type="inferred from homology"/>
<comment type="function">
    <text evidence="1">Plays a role in virus cell tropism, and may be required for efficient virus replication in macrophages.</text>
</comment>
<comment type="similarity">
    <text evidence="2">Belongs to the asfivirus MGF 360 family.</text>
</comment>
<sequence>MSLPLSLQTLVKKTVASQCLSIDEHCILKHCGLWWHDVPLKLCMDRGQIQIKSGFLGEDIDLHIALIIAVKENNYSLIKLFTEWGAHINYSLLSINTEHIRELCRQLGAKETLEDDDVFRIFTKIMHNKTSGRIILCHDIFMNNPNIENKFTIQLRGLICKRLWGLIEIKETDELNDLLVKYWYAKAVQYECKDAICFLEEKYTDLNEWRLKCLLYFNKIYELHEMYHKEKVQIDVHDMICLASTKDNNPLTIYYCYALGGNINQAMLTSIQYYNIGNIFFCIDLGGNAFEEGRAIAEQKGYNFLSHSLALDIFSSDASLPLNLKDPEEISSFLKDYKSKNLSIIWEYSHNIL</sequence>
<feature type="chain" id="PRO_0000373286" description="Protein MGF 360-13L">
    <location>
        <begin position="1"/>
        <end position="353"/>
    </location>
</feature>
<organismHost>
    <name type="scientific">Ornithodoros</name>
    <name type="common">relapsing fever ticks</name>
    <dbReference type="NCBI Taxonomy" id="6937"/>
</organismHost>
<organismHost>
    <name type="scientific">Phacochoerus aethiopicus</name>
    <name type="common">Warthog</name>
    <dbReference type="NCBI Taxonomy" id="85517"/>
</organismHost>
<organismHost>
    <name type="scientific">Phacochoerus africanus</name>
    <name type="common">Warthog</name>
    <dbReference type="NCBI Taxonomy" id="41426"/>
</organismHost>
<organismHost>
    <name type="scientific">Potamochoerus larvatus</name>
    <name type="common">Bushpig</name>
    <dbReference type="NCBI Taxonomy" id="273792"/>
</organismHost>
<organismHost>
    <name type="scientific">Sus scrofa</name>
    <name type="common">Pig</name>
    <dbReference type="NCBI Taxonomy" id="9823"/>
</organismHost>
<accession>P0C9Q4</accession>
<name>36013_ASFP4</name>
<evidence type="ECO:0000250" key="1"/>
<evidence type="ECO:0000305" key="2"/>
<dbReference type="EMBL" id="AY261363">
    <property type="status" value="NOT_ANNOTATED_CDS"/>
    <property type="molecule type" value="Genomic_DNA"/>
</dbReference>
<dbReference type="SMR" id="P0C9Q4"/>
<dbReference type="Proteomes" id="UP000000859">
    <property type="component" value="Segment"/>
</dbReference>
<dbReference type="GO" id="GO:0042330">
    <property type="term" value="P:taxis"/>
    <property type="evidence" value="ECO:0007669"/>
    <property type="project" value="InterPro"/>
</dbReference>
<dbReference type="InterPro" id="IPR002595">
    <property type="entry name" value="ASFV_MGF360"/>
</dbReference>
<dbReference type="Pfam" id="PF01671">
    <property type="entry name" value="ASFV_360"/>
    <property type="match status" value="1"/>
</dbReference>
<gene>
    <name type="ordered locus">Pret-036</name>
</gene>
<protein>
    <recommendedName>
        <fullName>Protein MGF 360-13L</fullName>
    </recommendedName>
</protein>
<organism>
    <name type="scientific">African swine fever virus (isolate Tick/South Africa/Pretoriuskop Pr4/1996)</name>
    <name type="common">ASFV</name>
    <dbReference type="NCBI Taxonomy" id="561443"/>
    <lineage>
        <taxon>Viruses</taxon>
        <taxon>Varidnaviria</taxon>
        <taxon>Bamfordvirae</taxon>
        <taxon>Nucleocytoviricota</taxon>
        <taxon>Pokkesviricetes</taxon>
        <taxon>Asfuvirales</taxon>
        <taxon>Asfarviridae</taxon>
        <taxon>Asfivirus</taxon>
        <taxon>African swine fever virus</taxon>
    </lineage>
</organism>
<reference key="1">
    <citation type="submission" date="2003-03" db="EMBL/GenBank/DDBJ databases">
        <title>African swine fever virus genomes.</title>
        <authorList>
            <person name="Kutish G.F."/>
            <person name="Rock D.L."/>
        </authorList>
    </citation>
    <scope>NUCLEOTIDE SEQUENCE [LARGE SCALE GENOMIC DNA]</scope>
</reference>